<accession>Q00312</accession>
<organism>
    <name type="scientific">Candida albicans</name>
    <name type="common">Yeast</name>
    <dbReference type="NCBI Taxonomy" id="5476"/>
    <lineage>
        <taxon>Eukaryota</taxon>
        <taxon>Fungi</taxon>
        <taxon>Dikarya</taxon>
        <taxon>Ascomycota</taxon>
        <taxon>Saccharomycotina</taxon>
        <taxon>Pichiomycetes</taxon>
        <taxon>Debaryomycetaceae</taxon>
        <taxon>Candida/Lodderomyces clade</taxon>
        <taxon>Candida</taxon>
    </lineage>
</organism>
<sequence length="527" mass="59441">MSSNKNQSDLNIPTNSASLKQKQRQQLGIKSEIGASTSDVYDPQVASYLSAGDSPSQFANTALHHSNSVGYSASAAAAAAELQHRAELQRRQQQLQQQELQHQQEQLQQYRQAQAQAQAQAQAQREHQQLQHAYQQQQQLHQLGQLSQQLAQPHLSQHEHVRDALTTDEFDTNEDLRSRYIENEIVKTFNSKAELVHFVKNELGPEERCKIVINSSKPKAVYFQCERSGSFRTTVKDATKRQRIAYTKRNKCAYRLVANLYPNEKDQKRKNKPDEPGHNEENSRISEMWVLRMINPQHNHAPDPINKKKRQKTSRTLVEKPINKPHHHHLLQQEQQQQQQQQQQQQQQQQQQQHNANSQAQQQAAQLQQQMQQQLQASGLPTTPNYSELLGQLGQLSQQQSQQQQLHHIPQQRQRTQSQQSQQQPQQTAHGLDQPDAAVIAAIEASAAAAVASQGSPNVTAAAVAALQHTQGNEHDAQQQQDRGGNNGGAIDSNVDPSLDPNVDPNVQAHDHSHGLRNSYGKRSGFL</sequence>
<dbReference type="EMBL" id="D85862">
    <property type="protein sequence ID" value="BAA12888.1"/>
    <property type="molecule type" value="Genomic_DNA"/>
</dbReference>
<dbReference type="VEuPathDB" id="FungiDB:C6_02840C_A"/>
<dbReference type="VEuPathDB" id="FungiDB:CAWG_05080"/>
<dbReference type="GO" id="GO:0000781">
    <property type="term" value="C:chromosome, telomeric region"/>
    <property type="evidence" value="ECO:0007669"/>
    <property type="project" value="UniProtKB-SubCell"/>
</dbReference>
<dbReference type="GO" id="GO:0016592">
    <property type="term" value="C:mediator complex"/>
    <property type="evidence" value="ECO:0007669"/>
    <property type="project" value="TreeGrafter"/>
</dbReference>
<dbReference type="GO" id="GO:0003677">
    <property type="term" value="F:DNA binding"/>
    <property type="evidence" value="ECO:0007669"/>
    <property type="project" value="UniProtKB-KW"/>
</dbReference>
<dbReference type="GO" id="GO:0003713">
    <property type="term" value="F:transcription coactivator activity"/>
    <property type="evidence" value="ECO:0007669"/>
    <property type="project" value="TreeGrafter"/>
</dbReference>
<dbReference type="GO" id="GO:0045944">
    <property type="term" value="P:positive regulation of transcription by RNA polymerase II"/>
    <property type="evidence" value="ECO:0007669"/>
    <property type="project" value="TreeGrafter"/>
</dbReference>
<dbReference type="InterPro" id="IPR051647">
    <property type="entry name" value="Mediator_comp_sub12"/>
</dbReference>
<dbReference type="PANTHER" id="PTHR46007:SF12">
    <property type="entry name" value="C2H2-TYPE DOMAIN-CONTAINING PROTEIN-RELATED"/>
    <property type="match status" value="1"/>
</dbReference>
<dbReference type="PANTHER" id="PTHR46007">
    <property type="entry name" value="MEDIATOR OF RNA POLYMERASE II TRANSCRIPTION SUBUNIT 12"/>
    <property type="match status" value="1"/>
</dbReference>
<gene>
    <name type="primary">RBF1</name>
</gene>
<name>RBF1_CANAX</name>
<keyword id="KW-0010">Activator</keyword>
<keyword id="KW-0158">Chromosome</keyword>
<keyword id="KW-0903">Direct protein sequencing</keyword>
<keyword id="KW-0238">DNA-binding</keyword>
<keyword id="KW-0539">Nucleus</keyword>
<keyword id="KW-0779">Telomere</keyword>
<keyword id="KW-0804">Transcription</keyword>
<keyword id="KW-0805">Transcription regulation</keyword>
<feature type="chain" id="PRO_0000097185" description="Transcription factor RBF1">
    <location>
        <begin position="1"/>
        <end position="527"/>
    </location>
</feature>
<feature type="DNA-binding region" evidence="1">
    <location>
        <begin position="160"/>
        <end position="300"/>
    </location>
</feature>
<feature type="region of interest" description="Disordered" evidence="2">
    <location>
        <begin position="1"/>
        <end position="36"/>
    </location>
</feature>
<feature type="region of interest" description="Disordered" evidence="2">
    <location>
        <begin position="258"/>
        <end position="281"/>
    </location>
</feature>
<feature type="region of interest" description="Disordered" evidence="2">
    <location>
        <begin position="328"/>
        <end position="365"/>
    </location>
</feature>
<feature type="region of interest" description="Disordered" evidence="2">
    <location>
        <begin position="395"/>
        <end position="433"/>
    </location>
</feature>
<feature type="region of interest" description="Disordered" evidence="2">
    <location>
        <begin position="470"/>
        <end position="527"/>
    </location>
</feature>
<feature type="compositionally biased region" description="Basic and acidic residues" evidence="2">
    <location>
        <begin position="263"/>
        <end position="281"/>
    </location>
</feature>
<feature type="compositionally biased region" description="Low complexity" evidence="2">
    <location>
        <begin position="332"/>
        <end position="365"/>
    </location>
</feature>
<feature type="compositionally biased region" description="Low complexity" evidence="2">
    <location>
        <begin position="395"/>
        <end position="428"/>
    </location>
</feature>
<reference key="1">
    <citation type="journal article" date="1997" name="Microbiology">
        <title>A DNA-binding protein from Candida albicans that binds to the RPG box of Saccharomyces cerevisiae and the telomeric repeat sequence of C. albicans.</title>
        <authorList>
            <person name="Ishii N."/>
            <person name="Yamamoto M."/>
            <person name="Lahm H.-W."/>
            <person name="Iizumi S."/>
            <person name="Yoshihara F."/>
            <person name="Nakayama H."/>
            <person name="Arisawa M."/>
            <person name="Aoki Y."/>
        </authorList>
    </citation>
    <scope>NUCLEOTIDE SEQUENCE [GENOMIC DNA]</scope>
    <scope>PARTIAL PROTEIN SEQUENCE</scope>
    <scope>FUNCTION</scope>
    <scope>DNA-BINDING</scope>
    <source>
        <strain>ATCC 10231 / CBS 6431 / CIP 48.72 / DSM 1386 / NBRC 1594</strain>
    </source>
</reference>
<reference key="2">
    <citation type="journal article" date="1997" name="Microbiology">
        <title>Biochemical and genetic characterization of Rbf1p, a putative transcription factor of Candida albicans.</title>
        <authorList>
            <person name="Ishii N."/>
            <person name="Yamamoto M."/>
            <person name="Yoshihara F."/>
            <person name="Arisawa M."/>
            <person name="Aoki Y."/>
        </authorList>
    </citation>
    <scope>CHARACTERIZATION</scope>
</reference>
<protein>
    <recommendedName>
        <fullName>Transcription factor RBF1</fullName>
    </recommendedName>
    <alternativeName>
        <fullName>RPG-box-binding factor 1</fullName>
    </alternativeName>
    <alternativeName>
        <fullName>Repressor-activator protein 1</fullName>
    </alternativeName>
</protein>
<proteinExistence type="evidence at protein level"/>
<evidence type="ECO:0000255" key="1"/>
<evidence type="ECO:0000256" key="2">
    <source>
        <dbReference type="SAM" id="MobiDB-lite"/>
    </source>
</evidence>
<evidence type="ECO:0000269" key="3">
    <source>
    </source>
</evidence>
<evidence type="ECO:0000305" key="4"/>
<comment type="function">
    <text evidence="3">Transcriptional activator that binds to the RPG box and to telomeres. Involved in the regulation of the transition between yeast and filamentous forms and plays a role in virulence. Induces expression of HWP1, a major hyphal cell protein and virulence factor.</text>
</comment>
<comment type="subcellular location">
    <subcellularLocation>
        <location>Nucleus</location>
    </subcellularLocation>
    <subcellularLocation>
        <location>Chromosome</location>
        <location>Telomere</location>
    </subcellularLocation>
</comment>
<comment type="similarity">
    <text evidence="4">Belongs to the RBF1 family.</text>
</comment>